<protein>
    <recommendedName>
        <fullName>Pre-mRNA-processing factor 39</fullName>
    </recommendedName>
    <alternativeName>
        <fullName>PRP39 homolog</fullName>
    </alternativeName>
</protein>
<name>PRP39_XENLA</name>
<gene>
    <name type="primary">prpf39</name>
</gene>
<reference key="1">
    <citation type="submission" date="2005-07" db="EMBL/GenBank/DDBJ databases">
        <authorList>
            <consortium name="NIH - Xenopus Gene Collection (XGC) project"/>
        </authorList>
    </citation>
    <scope>NUCLEOTIDE SEQUENCE [LARGE SCALE MRNA]</scope>
    <source>
        <tissue>Oocyte</tissue>
    </source>
</reference>
<evidence type="ECO:0000250" key="1"/>
<evidence type="ECO:0000256" key="2">
    <source>
        <dbReference type="SAM" id="MobiDB-lite"/>
    </source>
</evidence>
<evidence type="ECO:0000305" key="3"/>
<keyword id="KW-0507">mRNA processing</keyword>
<keyword id="KW-0508">mRNA splicing</keyword>
<keyword id="KW-0539">Nucleus</keyword>
<keyword id="KW-1185">Reference proteome</keyword>
<keyword id="KW-0677">Repeat</keyword>
<organism>
    <name type="scientific">Xenopus laevis</name>
    <name type="common">African clawed frog</name>
    <dbReference type="NCBI Taxonomy" id="8355"/>
    <lineage>
        <taxon>Eukaryota</taxon>
        <taxon>Metazoa</taxon>
        <taxon>Chordata</taxon>
        <taxon>Craniata</taxon>
        <taxon>Vertebrata</taxon>
        <taxon>Euteleostomi</taxon>
        <taxon>Amphibia</taxon>
        <taxon>Batrachia</taxon>
        <taxon>Anura</taxon>
        <taxon>Pipoidea</taxon>
        <taxon>Pipidae</taxon>
        <taxon>Xenopodinae</taxon>
        <taxon>Xenopus</taxon>
        <taxon>Xenopus</taxon>
    </lineage>
</organism>
<proteinExistence type="evidence at transcript level"/>
<sequence length="641" mass="74562">MEKSPEHCAEGSPSPATESAPSATEPPLPSTEPPLPSTEPPLPSTEPPLPPLPPDFEKYWKSVQAYPEDFNTWTYLLQYVEQENHLFAARKAFDAFLAHYPYCYGYWKKYADLEKKNNNILEADEVYRRGIQAITLSVDLWMHYLNFLKETLDPADPETSLTLRGTFEHAVVSAGLDFRSDKLWEMYINWETEQGNLSGVTSIYSRLLGIPTQFYSLHFQRFKEHIQGHLPREFLTSEKFIELRKELASMTLHGGTNDDIPSGLEEIKDPAKRTTEVENMRHRIIEVHQEIFNLNEHEVSKIWNFEEEIKRPYFHVKPLEKAQLNNWKEYLEFELENGSNERIVILFERCVIACACYEEFWIKYAKYMENHSVEGVRHVYNRACHVHLAKKPMVHLLWAAFEEQQGNLEEARRILKNIETAIEGLAMVRLRRVNLERRHGNVKEAEHLLEEAMNKTKTSSESSFYAIKLARHLFKVQANVVKARKVLSNAIQKDKENTKLYLNLLEMEYNCDIKQNEENILAAFDKAIKSPMSIAMRVKFSQRKVEFLEDFGSDVNKLLDTYNEHQKLLKHQDIVKRKAENGLEQPEAKRLHAEEVSTAASVPVTTASMDATQSGYNYGSWYQYNYPANWNFGQYYNTPST</sequence>
<comment type="function">
    <text evidence="1">Involved in pre-mRNA splicing.</text>
</comment>
<comment type="subcellular location">
    <subcellularLocation>
        <location evidence="1">Nucleus</location>
    </subcellularLocation>
</comment>
<comment type="similarity">
    <text evidence="3">Belongs to the PRP39 family.</text>
</comment>
<dbReference type="EMBL" id="BC098999">
    <property type="protein sequence ID" value="AAH98999.1"/>
    <property type="molecule type" value="mRNA"/>
</dbReference>
<dbReference type="RefSeq" id="NP_001089580.1">
    <property type="nucleotide sequence ID" value="NM_001096111.1"/>
</dbReference>
<dbReference type="SMR" id="Q4KLU2"/>
<dbReference type="DNASU" id="734636"/>
<dbReference type="GeneID" id="734636"/>
<dbReference type="KEGG" id="xla:734636"/>
<dbReference type="AGR" id="Xenbase:XB-GENE-994641"/>
<dbReference type="CTD" id="734636"/>
<dbReference type="Xenbase" id="XB-GENE-994641">
    <property type="gene designation" value="prpf39.L"/>
</dbReference>
<dbReference type="OrthoDB" id="10265668at2759"/>
<dbReference type="Proteomes" id="UP000186698">
    <property type="component" value="Chromosome 8L"/>
</dbReference>
<dbReference type="Bgee" id="734636">
    <property type="expression patterns" value="Expressed in pancreas and 19 other cell types or tissues"/>
</dbReference>
<dbReference type="GO" id="GO:0000243">
    <property type="term" value="C:commitment complex"/>
    <property type="evidence" value="ECO:0000318"/>
    <property type="project" value="GO_Central"/>
</dbReference>
<dbReference type="GO" id="GO:0005685">
    <property type="term" value="C:U1 snRNP"/>
    <property type="evidence" value="ECO:0000318"/>
    <property type="project" value="GO_Central"/>
</dbReference>
<dbReference type="GO" id="GO:0071004">
    <property type="term" value="C:U2-type prespliceosome"/>
    <property type="evidence" value="ECO:0000318"/>
    <property type="project" value="GO_Central"/>
</dbReference>
<dbReference type="GO" id="GO:0030627">
    <property type="term" value="F:pre-mRNA 5'-splice site binding"/>
    <property type="evidence" value="ECO:0007669"/>
    <property type="project" value="TreeGrafter"/>
</dbReference>
<dbReference type="GO" id="GO:0000395">
    <property type="term" value="P:mRNA 5'-splice site recognition"/>
    <property type="evidence" value="ECO:0000318"/>
    <property type="project" value="GO_Central"/>
</dbReference>
<dbReference type="FunFam" id="1.25.40.10:FF:000063">
    <property type="entry name" value="Pre-mRNA processing factor 39"/>
    <property type="match status" value="1"/>
</dbReference>
<dbReference type="FunFam" id="1.25.40.10:FF:000091">
    <property type="entry name" value="Pre-mRNA-processing factor 39"/>
    <property type="match status" value="1"/>
</dbReference>
<dbReference type="Gene3D" id="1.25.40.10">
    <property type="entry name" value="Tetratricopeptide repeat domain"/>
    <property type="match status" value="2"/>
</dbReference>
<dbReference type="InterPro" id="IPR003107">
    <property type="entry name" value="HAT"/>
</dbReference>
<dbReference type="InterPro" id="IPR011990">
    <property type="entry name" value="TPR-like_helical_dom_sf"/>
</dbReference>
<dbReference type="PANTHER" id="PTHR17204">
    <property type="entry name" value="PRE-MRNA PROCESSING PROTEIN PRP39-RELATED"/>
    <property type="match status" value="1"/>
</dbReference>
<dbReference type="PANTHER" id="PTHR17204:SF32">
    <property type="entry name" value="PRE-MRNA-PROCESSING FACTOR 39"/>
    <property type="match status" value="1"/>
</dbReference>
<dbReference type="Pfam" id="PF23241">
    <property type="entry name" value="HAT_PRP39_C"/>
    <property type="match status" value="1"/>
</dbReference>
<dbReference type="Pfam" id="PF23240">
    <property type="entry name" value="HAT_PRP39_N"/>
    <property type="match status" value="1"/>
</dbReference>
<dbReference type="SMART" id="SM00386">
    <property type="entry name" value="HAT"/>
    <property type="match status" value="6"/>
</dbReference>
<dbReference type="SUPFAM" id="SSF48452">
    <property type="entry name" value="TPR-like"/>
    <property type="match status" value="2"/>
</dbReference>
<feature type="chain" id="PRO_0000259651" description="Pre-mRNA-processing factor 39">
    <location>
        <begin position="1"/>
        <end position="641"/>
    </location>
</feature>
<feature type="repeat" description="HAT 1">
    <location>
        <begin position="50"/>
        <end position="82"/>
    </location>
</feature>
<feature type="repeat" description="HAT 2">
    <location>
        <begin position="84"/>
        <end position="116"/>
    </location>
</feature>
<feature type="repeat" description="HAT 3">
    <location>
        <begin position="118"/>
        <end position="150"/>
    </location>
</feature>
<feature type="repeat" description="HAT 4">
    <location>
        <begin position="158"/>
        <end position="193"/>
    </location>
</feature>
<feature type="repeat" description="HAT 5">
    <location>
        <begin position="304"/>
        <end position="336"/>
    </location>
</feature>
<feature type="repeat" description="HAT 6">
    <location>
        <begin position="338"/>
        <end position="370"/>
    </location>
</feature>
<feature type="repeat" description="HAT 7">
    <location>
        <begin position="372"/>
        <end position="407"/>
    </location>
</feature>
<feature type="region of interest" description="Disordered" evidence="2">
    <location>
        <begin position="1"/>
        <end position="50"/>
    </location>
</feature>
<feature type="compositionally biased region" description="Low complexity" evidence="2">
    <location>
        <begin position="10"/>
        <end position="23"/>
    </location>
</feature>
<feature type="compositionally biased region" description="Pro residues" evidence="2">
    <location>
        <begin position="24"/>
        <end position="50"/>
    </location>
</feature>
<accession>Q4KLU2</accession>